<sequence>MSEFFKTVPVVKYEGADSSNPFAFKHYDANKMLMGKTMAEHLRVAVCYWHTFCWQGSDVFGANTFDRPWSKAASEMEAAKLKTDAAFEFFTKLGVPYYSFHDVDVSPEGRSIKEYINNFAQMVDVLQAKQEATGIKLLWGTANAFSNPRYMSGAASNPNPEIFAYAATQVFHAMNATKALKGENYVLWGGREGYETLLNTDLKRERAQLGRFMQMVVEHKYKIGFEGTLLIEPKPAEPTKHQYDYDTATVYGFLKEFGLEKEIKVNIEANHATLAGHSFHHEIATACSLGILGSVDANQGDAQLGWDTDQFPTSVEEYTLVTYEILKSGGFKTGGYMFDTKLRRQSMDLEDLFHGHIGAMDTLALSLERAVKMIEDEKLANIVDQRYAKWNDSLGADILAGKHTLQDLAEYAEKNNIDPQPVSGRQEMLENMVNGYIFK</sequence>
<protein>
    <recommendedName>
        <fullName evidence="1">Xylose isomerase</fullName>
        <ecNumber evidence="1">5.3.1.5</ecNumber>
    </recommendedName>
</protein>
<comment type="catalytic activity">
    <reaction evidence="1">
        <text>alpha-D-xylose = alpha-D-xylulofuranose</text>
        <dbReference type="Rhea" id="RHEA:22816"/>
        <dbReference type="ChEBI" id="CHEBI:28518"/>
        <dbReference type="ChEBI" id="CHEBI:188998"/>
        <dbReference type="EC" id="5.3.1.5"/>
    </reaction>
</comment>
<comment type="cofactor">
    <cofactor evidence="1">
        <name>Mg(2+)</name>
        <dbReference type="ChEBI" id="CHEBI:18420"/>
    </cofactor>
    <text evidence="1">Binds 2 magnesium ions per subunit.</text>
</comment>
<comment type="subunit">
    <text evidence="1">Homotetramer.</text>
</comment>
<comment type="subcellular location">
    <subcellularLocation>
        <location evidence="1">Cytoplasm</location>
    </subcellularLocation>
</comment>
<comment type="similarity">
    <text evidence="1">Belongs to the xylose isomerase family.</text>
</comment>
<reference key="1">
    <citation type="submission" date="2007-06" db="EMBL/GenBank/DDBJ databases">
        <title>Complete sequence of Marinomonas sp. MWYL1.</title>
        <authorList>
            <consortium name="US DOE Joint Genome Institute"/>
            <person name="Copeland A."/>
            <person name="Lucas S."/>
            <person name="Lapidus A."/>
            <person name="Barry K."/>
            <person name="Glavina del Rio T."/>
            <person name="Dalin E."/>
            <person name="Tice H."/>
            <person name="Pitluck S."/>
            <person name="Kiss H."/>
            <person name="Brettin T."/>
            <person name="Bruce D."/>
            <person name="Detter J.C."/>
            <person name="Han C."/>
            <person name="Schmutz J."/>
            <person name="Larimer F."/>
            <person name="Land M."/>
            <person name="Hauser L."/>
            <person name="Kyrpides N."/>
            <person name="Kim E."/>
            <person name="Johnston A.W.B."/>
            <person name="Todd J.D."/>
            <person name="Rogers R."/>
            <person name="Wexler M."/>
            <person name="Bond P.L."/>
            <person name="Li Y."/>
            <person name="Richardson P."/>
        </authorList>
    </citation>
    <scope>NUCLEOTIDE SEQUENCE [LARGE SCALE GENOMIC DNA]</scope>
    <source>
        <strain>MWYL1</strain>
    </source>
</reference>
<keyword id="KW-0119">Carbohydrate metabolism</keyword>
<keyword id="KW-0963">Cytoplasm</keyword>
<keyword id="KW-0413">Isomerase</keyword>
<keyword id="KW-0460">Magnesium</keyword>
<keyword id="KW-0479">Metal-binding</keyword>
<keyword id="KW-0859">Xylose metabolism</keyword>
<proteinExistence type="inferred from homology"/>
<accession>A6VWH1</accession>
<gene>
    <name evidence="1" type="primary">xylA</name>
    <name type="ordered locus">Mmwyl1_1876</name>
</gene>
<dbReference type="EC" id="5.3.1.5" evidence="1"/>
<dbReference type="EMBL" id="CP000749">
    <property type="protein sequence ID" value="ABR70800.1"/>
    <property type="molecule type" value="Genomic_DNA"/>
</dbReference>
<dbReference type="SMR" id="A6VWH1"/>
<dbReference type="STRING" id="400668.Mmwyl1_1876"/>
<dbReference type="KEGG" id="mmw:Mmwyl1_1876"/>
<dbReference type="eggNOG" id="COG2115">
    <property type="taxonomic scope" value="Bacteria"/>
</dbReference>
<dbReference type="HOGENOM" id="CLU_037261_1_0_6"/>
<dbReference type="OrthoDB" id="9763981at2"/>
<dbReference type="GO" id="GO:0005737">
    <property type="term" value="C:cytoplasm"/>
    <property type="evidence" value="ECO:0007669"/>
    <property type="project" value="UniProtKB-SubCell"/>
</dbReference>
<dbReference type="GO" id="GO:0000287">
    <property type="term" value="F:magnesium ion binding"/>
    <property type="evidence" value="ECO:0007669"/>
    <property type="project" value="UniProtKB-UniRule"/>
</dbReference>
<dbReference type="GO" id="GO:0009045">
    <property type="term" value="F:xylose isomerase activity"/>
    <property type="evidence" value="ECO:0007669"/>
    <property type="project" value="UniProtKB-UniRule"/>
</dbReference>
<dbReference type="GO" id="GO:0042732">
    <property type="term" value="P:D-xylose metabolic process"/>
    <property type="evidence" value="ECO:0007669"/>
    <property type="project" value="UniProtKB-UniRule"/>
</dbReference>
<dbReference type="FunFam" id="3.20.20.150:FF:000002">
    <property type="entry name" value="Xylose isomerase"/>
    <property type="match status" value="1"/>
</dbReference>
<dbReference type="Gene3D" id="3.20.20.150">
    <property type="entry name" value="Divalent-metal-dependent TIM barrel enzymes"/>
    <property type="match status" value="1"/>
</dbReference>
<dbReference type="HAMAP" id="MF_00455">
    <property type="entry name" value="Xylose_isom_A"/>
    <property type="match status" value="1"/>
</dbReference>
<dbReference type="InterPro" id="IPR036237">
    <property type="entry name" value="Xyl_isomerase-like_sf"/>
</dbReference>
<dbReference type="InterPro" id="IPR013452">
    <property type="entry name" value="Xylose_isom_bac"/>
</dbReference>
<dbReference type="InterPro" id="IPR001998">
    <property type="entry name" value="Xylose_isomerase"/>
</dbReference>
<dbReference type="NCBIfam" id="NF003998">
    <property type="entry name" value="PRK05474.1"/>
    <property type="match status" value="1"/>
</dbReference>
<dbReference type="NCBIfam" id="TIGR02630">
    <property type="entry name" value="xylose_isom_A"/>
    <property type="match status" value="1"/>
</dbReference>
<dbReference type="PANTHER" id="PTHR48408">
    <property type="match status" value="1"/>
</dbReference>
<dbReference type="PANTHER" id="PTHR48408:SF1">
    <property type="entry name" value="XYLOSE ISOMERASE"/>
    <property type="match status" value="1"/>
</dbReference>
<dbReference type="PRINTS" id="PR00688">
    <property type="entry name" value="XYLOSISMRASE"/>
</dbReference>
<dbReference type="SUPFAM" id="SSF51658">
    <property type="entry name" value="Xylose isomerase-like"/>
    <property type="match status" value="1"/>
</dbReference>
<dbReference type="PROSITE" id="PS51415">
    <property type="entry name" value="XYLOSE_ISOMERASE"/>
    <property type="match status" value="1"/>
</dbReference>
<feature type="chain" id="PRO_1000081032" description="Xylose isomerase">
    <location>
        <begin position="1"/>
        <end position="439"/>
    </location>
</feature>
<feature type="active site" evidence="1">
    <location>
        <position position="101"/>
    </location>
</feature>
<feature type="active site" evidence="1">
    <location>
        <position position="104"/>
    </location>
</feature>
<feature type="binding site" evidence="1">
    <location>
        <position position="232"/>
    </location>
    <ligand>
        <name>Mg(2+)</name>
        <dbReference type="ChEBI" id="CHEBI:18420"/>
        <label>1</label>
    </ligand>
</feature>
<feature type="binding site" evidence="1">
    <location>
        <position position="268"/>
    </location>
    <ligand>
        <name>Mg(2+)</name>
        <dbReference type="ChEBI" id="CHEBI:18420"/>
        <label>1</label>
    </ligand>
</feature>
<feature type="binding site" evidence="1">
    <location>
        <position position="268"/>
    </location>
    <ligand>
        <name>Mg(2+)</name>
        <dbReference type="ChEBI" id="CHEBI:18420"/>
        <label>2</label>
    </ligand>
</feature>
<feature type="binding site" evidence="1">
    <location>
        <position position="271"/>
    </location>
    <ligand>
        <name>Mg(2+)</name>
        <dbReference type="ChEBI" id="CHEBI:18420"/>
        <label>2</label>
    </ligand>
</feature>
<feature type="binding site" evidence="1">
    <location>
        <position position="296"/>
    </location>
    <ligand>
        <name>Mg(2+)</name>
        <dbReference type="ChEBI" id="CHEBI:18420"/>
        <label>1</label>
    </ligand>
</feature>
<feature type="binding site" evidence="1">
    <location>
        <position position="307"/>
    </location>
    <ligand>
        <name>Mg(2+)</name>
        <dbReference type="ChEBI" id="CHEBI:18420"/>
        <label>2</label>
    </ligand>
</feature>
<feature type="binding site" evidence="1">
    <location>
        <position position="309"/>
    </location>
    <ligand>
        <name>Mg(2+)</name>
        <dbReference type="ChEBI" id="CHEBI:18420"/>
        <label>2</label>
    </ligand>
</feature>
<feature type="binding site" evidence="1">
    <location>
        <position position="339"/>
    </location>
    <ligand>
        <name>Mg(2+)</name>
        <dbReference type="ChEBI" id="CHEBI:18420"/>
        <label>1</label>
    </ligand>
</feature>
<organism>
    <name type="scientific">Marinomonas sp. (strain MWYL1)</name>
    <dbReference type="NCBI Taxonomy" id="400668"/>
    <lineage>
        <taxon>Bacteria</taxon>
        <taxon>Pseudomonadati</taxon>
        <taxon>Pseudomonadota</taxon>
        <taxon>Gammaproteobacteria</taxon>
        <taxon>Oceanospirillales</taxon>
        <taxon>Oceanospirillaceae</taxon>
        <taxon>Marinomonas</taxon>
    </lineage>
</organism>
<name>XYLA_MARMS</name>
<evidence type="ECO:0000255" key="1">
    <source>
        <dbReference type="HAMAP-Rule" id="MF_00455"/>
    </source>
</evidence>